<comment type="function">
    <text evidence="1">Negatively regulates its own expression and that of the subsequent genes in the proximal part of the division and cell wall (dcw) gene cluster. Acts by binding directly to DNA. May also regulate the expression of genes outside the dcw cluster.</text>
</comment>
<comment type="subunit">
    <text evidence="1">Forms oligomers.</text>
</comment>
<comment type="subcellular location">
    <subcellularLocation>
        <location evidence="1">Cytoplasm</location>
        <location evidence="1">Nucleoid</location>
    </subcellularLocation>
</comment>
<comment type="similarity">
    <text evidence="1">Belongs to the MraZ family.</text>
</comment>
<proteinExistence type="inferred from homology"/>
<organism>
    <name type="scientific">Escherichia coli (strain ATCC 8739 / DSM 1576 / NBRC 3972 / NCIMB 8545 / WDCM 00012 / Crooks)</name>
    <dbReference type="NCBI Taxonomy" id="481805"/>
    <lineage>
        <taxon>Bacteria</taxon>
        <taxon>Pseudomonadati</taxon>
        <taxon>Pseudomonadota</taxon>
        <taxon>Gammaproteobacteria</taxon>
        <taxon>Enterobacterales</taxon>
        <taxon>Enterobacteriaceae</taxon>
        <taxon>Escherichia</taxon>
    </lineage>
</organism>
<dbReference type="EMBL" id="CP000946">
    <property type="protein sequence ID" value="ACA79190.1"/>
    <property type="molecule type" value="Genomic_DNA"/>
</dbReference>
<dbReference type="RefSeq" id="WP_001295770.1">
    <property type="nucleotide sequence ID" value="NZ_MTFT01000035.1"/>
</dbReference>
<dbReference type="SMR" id="B1IR97"/>
<dbReference type="GeneID" id="75202102"/>
<dbReference type="KEGG" id="ecl:EcolC_3576"/>
<dbReference type="HOGENOM" id="CLU_107907_2_0_6"/>
<dbReference type="GO" id="GO:0005737">
    <property type="term" value="C:cytoplasm"/>
    <property type="evidence" value="ECO:0007669"/>
    <property type="project" value="UniProtKB-UniRule"/>
</dbReference>
<dbReference type="GO" id="GO:0009295">
    <property type="term" value="C:nucleoid"/>
    <property type="evidence" value="ECO:0007669"/>
    <property type="project" value="UniProtKB-SubCell"/>
</dbReference>
<dbReference type="GO" id="GO:0003700">
    <property type="term" value="F:DNA-binding transcription factor activity"/>
    <property type="evidence" value="ECO:0007669"/>
    <property type="project" value="UniProtKB-UniRule"/>
</dbReference>
<dbReference type="GO" id="GO:0000976">
    <property type="term" value="F:transcription cis-regulatory region binding"/>
    <property type="evidence" value="ECO:0007669"/>
    <property type="project" value="TreeGrafter"/>
</dbReference>
<dbReference type="GO" id="GO:2000143">
    <property type="term" value="P:negative regulation of DNA-templated transcription initiation"/>
    <property type="evidence" value="ECO:0007669"/>
    <property type="project" value="TreeGrafter"/>
</dbReference>
<dbReference type="CDD" id="cd16321">
    <property type="entry name" value="MraZ_C"/>
    <property type="match status" value="1"/>
</dbReference>
<dbReference type="CDD" id="cd16320">
    <property type="entry name" value="MraZ_N"/>
    <property type="match status" value="1"/>
</dbReference>
<dbReference type="FunFam" id="3.40.1550.20:FF:000001">
    <property type="entry name" value="Transcriptional regulator MraZ"/>
    <property type="match status" value="1"/>
</dbReference>
<dbReference type="Gene3D" id="3.40.1550.20">
    <property type="entry name" value="Transcriptional regulator MraZ domain"/>
    <property type="match status" value="1"/>
</dbReference>
<dbReference type="HAMAP" id="MF_01008">
    <property type="entry name" value="MraZ"/>
    <property type="match status" value="1"/>
</dbReference>
<dbReference type="InterPro" id="IPR003444">
    <property type="entry name" value="MraZ"/>
</dbReference>
<dbReference type="InterPro" id="IPR035644">
    <property type="entry name" value="MraZ_C"/>
</dbReference>
<dbReference type="InterPro" id="IPR020603">
    <property type="entry name" value="MraZ_dom"/>
</dbReference>
<dbReference type="InterPro" id="IPR035642">
    <property type="entry name" value="MraZ_N"/>
</dbReference>
<dbReference type="InterPro" id="IPR038619">
    <property type="entry name" value="MraZ_sf"/>
</dbReference>
<dbReference type="InterPro" id="IPR007159">
    <property type="entry name" value="SpoVT-AbrB_dom"/>
</dbReference>
<dbReference type="InterPro" id="IPR037914">
    <property type="entry name" value="SpoVT-AbrB_sf"/>
</dbReference>
<dbReference type="NCBIfam" id="TIGR00242">
    <property type="entry name" value="division/cell wall cluster transcriptional repressor MraZ"/>
    <property type="match status" value="1"/>
</dbReference>
<dbReference type="PANTHER" id="PTHR34701">
    <property type="entry name" value="TRANSCRIPTIONAL REGULATOR MRAZ"/>
    <property type="match status" value="1"/>
</dbReference>
<dbReference type="PANTHER" id="PTHR34701:SF1">
    <property type="entry name" value="TRANSCRIPTIONAL REGULATOR MRAZ"/>
    <property type="match status" value="1"/>
</dbReference>
<dbReference type="Pfam" id="PF02381">
    <property type="entry name" value="MraZ"/>
    <property type="match status" value="2"/>
</dbReference>
<dbReference type="SUPFAM" id="SSF89447">
    <property type="entry name" value="AbrB/MazE/MraZ-like"/>
    <property type="match status" value="1"/>
</dbReference>
<dbReference type="PROSITE" id="PS51740">
    <property type="entry name" value="SPOVT_ABRB"/>
    <property type="match status" value="2"/>
</dbReference>
<evidence type="ECO:0000255" key="1">
    <source>
        <dbReference type="HAMAP-Rule" id="MF_01008"/>
    </source>
</evidence>
<evidence type="ECO:0000255" key="2">
    <source>
        <dbReference type="PROSITE-ProRule" id="PRU01076"/>
    </source>
</evidence>
<sequence length="152" mass="17360">MFRGATLVNLDSKGRLSVPTRYREQLLENAAGQMVCTIDIHHPCLLLYPLPEWEIIEQKLSRLSSMNPVERRVQRLLLGHASECQMDGAGRLLIAPVLRQHAGLTKEVMLVGQFNKFELWDETTWHQQVKEDIDAEQLATGDLSERLQDLSL</sequence>
<accession>B1IR97</accession>
<protein>
    <recommendedName>
        <fullName>Transcriptional regulator MraZ</fullName>
    </recommendedName>
</protein>
<gene>
    <name evidence="1" type="primary">mraZ</name>
    <name type="ordered locus">EcolC_3576</name>
</gene>
<reference key="1">
    <citation type="submission" date="2008-02" db="EMBL/GenBank/DDBJ databases">
        <title>Complete sequence of Escherichia coli C str. ATCC 8739.</title>
        <authorList>
            <person name="Copeland A."/>
            <person name="Lucas S."/>
            <person name="Lapidus A."/>
            <person name="Glavina del Rio T."/>
            <person name="Dalin E."/>
            <person name="Tice H."/>
            <person name="Bruce D."/>
            <person name="Goodwin L."/>
            <person name="Pitluck S."/>
            <person name="Kiss H."/>
            <person name="Brettin T."/>
            <person name="Detter J.C."/>
            <person name="Han C."/>
            <person name="Kuske C.R."/>
            <person name="Schmutz J."/>
            <person name="Larimer F."/>
            <person name="Land M."/>
            <person name="Hauser L."/>
            <person name="Kyrpides N."/>
            <person name="Mikhailova N."/>
            <person name="Ingram L."/>
            <person name="Richardson P."/>
        </authorList>
    </citation>
    <scope>NUCLEOTIDE SEQUENCE [LARGE SCALE GENOMIC DNA]</scope>
    <source>
        <strain>ATCC 8739 / DSM 1576 / NBRC 3972 / NCIMB 8545 / WDCM 00012 / Crooks</strain>
    </source>
</reference>
<name>MRAZ_ECOLC</name>
<keyword id="KW-0963">Cytoplasm</keyword>
<keyword id="KW-0238">DNA-binding</keyword>
<keyword id="KW-0677">Repeat</keyword>
<keyword id="KW-0678">Repressor</keyword>
<keyword id="KW-0804">Transcription</keyword>
<keyword id="KW-0805">Transcription regulation</keyword>
<feature type="chain" id="PRO_1000084004" description="Transcriptional regulator MraZ">
    <location>
        <begin position="1"/>
        <end position="152"/>
    </location>
</feature>
<feature type="domain" description="SpoVT-AbrB 1" evidence="2">
    <location>
        <begin position="5"/>
        <end position="52"/>
    </location>
</feature>
<feature type="domain" description="SpoVT-AbrB 2" evidence="2">
    <location>
        <begin position="81"/>
        <end position="124"/>
    </location>
</feature>